<gene>
    <name evidence="1" type="primary">nusB</name>
    <name type="ordered locus">PputW619_0571</name>
</gene>
<name>NUSB_PSEPW</name>
<proteinExistence type="inferred from homology"/>
<accession>B1J3F6</accession>
<reference key="1">
    <citation type="submission" date="2008-02" db="EMBL/GenBank/DDBJ databases">
        <title>Complete sequence of Pseudomonas putida W619.</title>
        <authorList>
            <person name="Copeland A."/>
            <person name="Lucas S."/>
            <person name="Lapidus A."/>
            <person name="Barry K."/>
            <person name="Detter J.C."/>
            <person name="Glavina del Rio T."/>
            <person name="Dalin E."/>
            <person name="Tice H."/>
            <person name="Pitluck S."/>
            <person name="Chain P."/>
            <person name="Malfatti S."/>
            <person name="Shin M."/>
            <person name="Vergez L."/>
            <person name="Schmutz J."/>
            <person name="Larimer F."/>
            <person name="Land M."/>
            <person name="Hauser L."/>
            <person name="Kyrpides N."/>
            <person name="Kim E."/>
            <person name="Taghavi S."/>
            <person name="Vangronsveld D."/>
            <person name="van der Lelie D."/>
            <person name="Richardson P."/>
        </authorList>
    </citation>
    <scope>NUCLEOTIDE SEQUENCE [LARGE SCALE GENOMIC DNA]</scope>
    <source>
        <strain>W619</strain>
    </source>
</reference>
<protein>
    <recommendedName>
        <fullName evidence="1">Transcription antitermination protein NusB</fullName>
    </recommendedName>
    <alternativeName>
        <fullName evidence="1">Antitermination factor NusB</fullName>
    </alternativeName>
</protein>
<organism>
    <name type="scientific">Pseudomonas putida (strain W619)</name>
    <dbReference type="NCBI Taxonomy" id="390235"/>
    <lineage>
        <taxon>Bacteria</taxon>
        <taxon>Pseudomonadati</taxon>
        <taxon>Pseudomonadota</taxon>
        <taxon>Gammaproteobacteria</taxon>
        <taxon>Pseudomonadales</taxon>
        <taxon>Pseudomonadaceae</taxon>
        <taxon>Pseudomonas</taxon>
    </lineage>
</organism>
<dbReference type="EMBL" id="CP000949">
    <property type="protein sequence ID" value="ACA71076.1"/>
    <property type="molecule type" value="Genomic_DNA"/>
</dbReference>
<dbReference type="SMR" id="B1J3F6"/>
<dbReference type="STRING" id="390235.PputW619_0571"/>
<dbReference type="KEGG" id="ppw:PputW619_0571"/>
<dbReference type="eggNOG" id="COG0781">
    <property type="taxonomic scope" value="Bacteria"/>
</dbReference>
<dbReference type="HOGENOM" id="CLU_087843_4_1_6"/>
<dbReference type="OrthoDB" id="9789556at2"/>
<dbReference type="GO" id="GO:0005829">
    <property type="term" value="C:cytosol"/>
    <property type="evidence" value="ECO:0007669"/>
    <property type="project" value="TreeGrafter"/>
</dbReference>
<dbReference type="GO" id="GO:0003723">
    <property type="term" value="F:RNA binding"/>
    <property type="evidence" value="ECO:0007669"/>
    <property type="project" value="UniProtKB-UniRule"/>
</dbReference>
<dbReference type="GO" id="GO:0006353">
    <property type="term" value="P:DNA-templated transcription termination"/>
    <property type="evidence" value="ECO:0007669"/>
    <property type="project" value="UniProtKB-UniRule"/>
</dbReference>
<dbReference type="GO" id="GO:0031564">
    <property type="term" value="P:transcription antitermination"/>
    <property type="evidence" value="ECO:0007669"/>
    <property type="project" value="UniProtKB-KW"/>
</dbReference>
<dbReference type="FunFam" id="1.10.940.10:FF:000001">
    <property type="entry name" value="Transcription antitermination factor NusB"/>
    <property type="match status" value="1"/>
</dbReference>
<dbReference type="Gene3D" id="1.10.940.10">
    <property type="entry name" value="NusB-like"/>
    <property type="match status" value="1"/>
</dbReference>
<dbReference type="HAMAP" id="MF_00073">
    <property type="entry name" value="NusB"/>
    <property type="match status" value="1"/>
</dbReference>
<dbReference type="InterPro" id="IPR035926">
    <property type="entry name" value="NusB-like_sf"/>
</dbReference>
<dbReference type="InterPro" id="IPR011605">
    <property type="entry name" value="NusB_fam"/>
</dbReference>
<dbReference type="InterPro" id="IPR006027">
    <property type="entry name" value="NusB_RsmB_TIM44"/>
</dbReference>
<dbReference type="NCBIfam" id="TIGR01951">
    <property type="entry name" value="nusB"/>
    <property type="match status" value="1"/>
</dbReference>
<dbReference type="PANTHER" id="PTHR11078:SF3">
    <property type="entry name" value="ANTITERMINATION NUSB DOMAIN-CONTAINING PROTEIN"/>
    <property type="match status" value="1"/>
</dbReference>
<dbReference type="PANTHER" id="PTHR11078">
    <property type="entry name" value="N UTILIZATION SUBSTANCE PROTEIN B-RELATED"/>
    <property type="match status" value="1"/>
</dbReference>
<dbReference type="Pfam" id="PF01029">
    <property type="entry name" value="NusB"/>
    <property type="match status" value="1"/>
</dbReference>
<dbReference type="SUPFAM" id="SSF48013">
    <property type="entry name" value="NusB-like"/>
    <property type="match status" value="1"/>
</dbReference>
<evidence type="ECO:0000255" key="1">
    <source>
        <dbReference type="HAMAP-Rule" id="MF_00073"/>
    </source>
</evidence>
<evidence type="ECO:0000256" key="2">
    <source>
        <dbReference type="SAM" id="MobiDB-lite"/>
    </source>
</evidence>
<feature type="chain" id="PRO_1000092573" description="Transcription antitermination protein NusB">
    <location>
        <begin position="1"/>
        <end position="166"/>
    </location>
</feature>
<feature type="region of interest" description="Disordered" evidence="2">
    <location>
        <begin position="1"/>
        <end position="28"/>
    </location>
</feature>
<feature type="compositionally biased region" description="Basic and acidic residues" evidence="2">
    <location>
        <begin position="1"/>
        <end position="18"/>
    </location>
</feature>
<sequence length="166" mass="18730">MISDESDRFNPRDPKPADAGKPSKSAKRREARKLATQALYQWHMAQHSLNEIEAQFRVDNDFTDVDGAYFREILHGVPAIKSEIDSALKPCMDIALEELDPVELAVLRLSTWEFIKRVDVPYRVVINEGVELAKVFGATDGHKFVNGVLDKLAPSLREAEVKANKR</sequence>
<comment type="function">
    <text evidence="1">Involved in transcription antitermination. Required for transcription of ribosomal RNA (rRNA) genes. Binds specifically to the boxA antiterminator sequence of the ribosomal RNA (rrn) operons.</text>
</comment>
<comment type="similarity">
    <text evidence="1">Belongs to the NusB family.</text>
</comment>
<keyword id="KW-0694">RNA-binding</keyword>
<keyword id="KW-0804">Transcription</keyword>
<keyword id="KW-0889">Transcription antitermination</keyword>
<keyword id="KW-0805">Transcription regulation</keyword>